<organism>
    <name type="scientific">Helicobacter pylori (strain ATCC 700392 / 26695)</name>
    <name type="common">Campylobacter pylori</name>
    <dbReference type="NCBI Taxonomy" id="85962"/>
    <lineage>
        <taxon>Bacteria</taxon>
        <taxon>Pseudomonadati</taxon>
        <taxon>Campylobacterota</taxon>
        <taxon>Epsilonproteobacteria</taxon>
        <taxon>Campylobacterales</taxon>
        <taxon>Helicobacteraceae</taxon>
        <taxon>Helicobacter</taxon>
    </lineage>
</organism>
<sequence length="159" mass="17809">MQQAPVVLSTLDKLLNWGRSNSLWPLTYGLACCAIEMMATGGSRFDFDRFGTIFRASPRQSDVMIIAGTLTKKHAEFMRRLYDQMPEPKWVISMGSCANTGGMFNTYATVQGADRVVPVDIYLPGCAPRPETLQYALMVLQDKIRRSKAIKQDAPKRLV</sequence>
<reference key="1">
    <citation type="journal article" date="1997" name="Nature">
        <title>The complete genome sequence of the gastric pathogen Helicobacter pylori.</title>
        <authorList>
            <person name="Tomb J.-F."/>
            <person name="White O."/>
            <person name="Kerlavage A.R."/>
            <person name="Clayton R.A."/>
            <person name="Sutton G.G."/>
            <person name="Fleischmann R.D."/>
            <person name="Ketchum K.A."/>
            <person name="Klenk H.-P."/>
            <person name="Gill S.R."/>
            <person name="Dougherty B.A."/>
            <person name="Nelson K.E."/>
            <person name="Quackenbush J."/>
            <person name="Zhou L."/>
            <person name="Kirkness E.F."/>
            <person name="Peterson S.N."/>
            <person name="Loftus B.J."/>
            <person name="Richardson D.L."/>
            <person name="Dodson R.J."/>
            <person name="Khalak H.G."/>
            <person name="Glodek A."/>
            <person name="McKenney K."/>
            <person name="FitzGerald L.M."/>
            <person name="Lee N."/>
            <person name="Adams M.D."/>
            <person name="Hickey E.K."/>
            <person name="Berg D.E."/>
            <person name="Gocayne J.D."/>
            <person name="Utterback T.R."/>
            <person name="Peterson J.D."/>
            <person name="Kelley J.M."/>
            <person name="Cotton M.D."/>
            <person name="Weidman J.F."/>
            <person name="Fujii C."/>
            <person name="Bowman C."/>
            <person name="Watthey L."/>
            <person name="Wallin E."/>
            <person name="Hayes W.S."/>
            <person name="Borodovsky M."/>
            <person name="Karp P.D."/>
            <person name="Smith H.O."/>
            <person name="Fraser C.M."/>
            <person name="Venter J.C."/>
        </authorList>
    </citation>
    <scope>NUCLEOTIDE SEQUENCE [LARGE SCALE GENOMIC DNA]</scope>
    <source>
        <strain>ATCC 700392 / 26695</strain>
    </source>
</reference>
<accession>O25851</accession>
<evidence type="ECO:0000255" key="1">
    <source>
        <dbReference type="HAMAP-Rule" id="MF_01356"/>
    </source>
</evidence>
<proteinExistence type="inferred from homology"/>
<gene>
    <name evidence="1" type="primary">nuoB</name>
    <name type="ordered locus">HP_1261</name>
</gene>
<protein>
    <recommendedName>
        <fullName evidence="1">NADH-quinone oxidoreductase subunit B</fullName>
        <ecNumber evidence="1">7.1.1.-</ecNumber>
    </recommendedName>
    <alternativeName>
        <fullName evidence="1">NADH dehydrogenase I subunit B</fullName>
    </alternativeName>
    <alternativeName>
        <fullName evidence="1">NDH-1 subunit B</fullName>
    </alternativeName>
</protein>
<name>NUOB_HELPY</name>
<comment type="function">
    <text evidence="1">NDH-1 shuttles electrons from NADH, via FMN and iron-sulfur (Fe-S) centers, to quinones in the respiratory chain. The immediate electron acceptor for the enzyme in this species is believed to be ubiquinone. Couples the redox reaction to proton translocation (for every two electrons transferred, four hydrogen ions are translocated across the cytoplasmic membrane), and thus conserves the redox energy in a proton gradient.</text>
</comment>
<comment type="catalytic activity">
    <reaction evidence="1">
        <text>a quinone + NADH + 5 H(+)(in) = a quinol + NAD(+) + 4 H(+)(out)</text>
        <dbReference type="Rhea" id="RHEA:57888"/>
        <dbReference type="ChEBI" id="CHEBI:15378"/>
        <dbReference type="ChEBI" id="CHEBI:24646"/>
        <dbReference type="ChEBI" id="CHEBI:57540"/>
        <dbReference type="ChEBI" id="CHEBI:57945"/>
        <dbReference type="ChEBI" id="CHEBI:132124"/>
    </reaction>
</comment>
<comment type="cofactor">
    <cofactor evidence="1">
        <name>[4Fe-4S] cluster</name>
        <dbReference type="ChEBI" id="CHEBI:49883"/>
    </cofactor>
    <text evidence="1">Binds 1 [4Fe-4S] cluster.</text>
</comment>
<comment type="subunit">
    <text evidence="1">NDH-1 is composed of 14 different subunits. Subunits NuoB, C, D, E, F, and G constitute the peripheral sector of the complex.</text>
</comment>
<comment type="subcellular location">
    <subcellularLocation>
        <location evidence="1">Cell inner membrane</location>
        <topology evidence="1">Peripheral membrane protein</topology>
        <orientation evidence="1">Cytoplasmic side</orientation>
    </subcellularLocation>
</comment>
<comment type="similarity">
    <text evidence="1">Belongs to the complex I 20 kDa subunit family.</text>
</comment>
<feature type="chain" id="PRO_0000376247" description="NADH-quinone oxidoreductase subunit B">
    <location>
        <begin position="1"/>
        <end position="159"/>
    </location>
</feature>
<feature type="binding site" evidence="1">
    <location>
        <position position="32"/>
    </location>
    <ligand>
        <name>[4Fe-4S] cluster</name>
        <dbReference type="ChEBI" id="CHEBI:49883"/>
    </ligand>
</feature>
<feature type="binding site" evidence="1">
    <location>
        <position position="33"/>
    </location>
    <ligand>
        <name>[4Fe-4S] cluster</name>
        <dbReference type="ChEBI" id="CHEBI:49883"/>
    </ligand>
</feature>
<feature type="binding site" evidence="1">
    <location>
        <position position="97"/>
    </location>
    <ligand>
        <name>[4Fe-4S] cluster</name>
        <dbReference type="ChEBI" id="CHEBI:49883"/>
    </ligand>
</feature>
<feature type="binding site" evidence="1">
    <location>
        <position position="126"/>
    </location>
    <ligand>
        <name>[4Fe-4S] cluster</name>
        <dbReference type="ChEBI" id="CHEBI:49883"/>
    </ligand>
</feature>
<dbReference type="EC" id="7.1.1.-" evidence="1"/>
<dbReference type="EMBL" id="AE000511">
    <property type="protein sequence ID" value="AAD08307.1"/>
    <property type="molecule type" value="Genomic_DNA"/>
</dbReference>
<dbReference type="PIR" id="E64677">
    <property type="entry name" value="E64677"/>
</dbReference>
<dbReference type="RefSeq" id="NP_208053.1">
    <property type="nucleotide sequence ID" value="NC_000915.1"/>
</dbReference>
<dbReference type="RefSeq" id="WP_001183511.1">
    <property type="nucleotide sequence ID" value="NC_018939.1"/>
</dbReference>
<dbReference type="SMR" id="O25851"/>
<dbReference type="FunCoup" id="O25851">
    <property type="interactions" value="238"/>
</dbReference>
<dbReference type="IntAct" id="O25851">
    <property type="interactions" value="1"/>
</dbReference>
<dbReference type="STRING" id="85962.HP_1261"/>
<dbReference type="PaxDb" id="85962-C694_06520"/>
<dbReference type="EnsemblBacteria" id="AAD08307">
    <property type="protein sequence ID" value="AAD08307"/>
    <property type="gene ID" value="HP_1261"/>
</dbReference>
<dbReference type="KEGG" id="heo:C694_06520"/>
<dbReference type="KEGG" id="hpy:HP_1261"/>
<dbReference type="PATRIC" id="fig|85962.47.peg.1354"/>
<dbReference type="eggNOG" id="COG0377">
    <property type="taxonomic scope" value="Bacteria"/>
</dbReference>
<dbReference type="InParanoid" id="O25851"/>
<dbReference type="OrthoDB" id="9786737at2"/>
<dbReference type="PhylomeDB" id="O25851"/>
<dbReference type="BioCyc" id="MetaCyc:HP_RS06220-MONOMER"/>
<dbReference type="Proteomes" id="UP000000429">
    <property type="component" value="Chromosome"/>
</dbReference>
<dbReference type="GO" id="GO:0005886">
    <property type="term" value="C:plasma membrane"/>
    <property type="evidence" value="ECO:0007669"/>
    <property type="project" value="UniProtKB-SubCell"/>
</dbReference>
<dbReference type="GO" id="GO:0045271">
    <property type="term" value="C:respiratory chain complex I"/>
    <property type="evidence" value="ECO:0000318"/>
    <property type="project" value="GO_Central"/>
</dbReference>
<dbReference type="GO" id="GO:0051539">
    <property type="term" value="F:4 iron, 4 sulfur cluster binding"/>
    <property type="evidence" value="ECO:0007669"/>
    <property type="project" value="UniProtKB-KW"/>
</dbReference>
<dbReference type="GO" id="GO:0005506">
    <property type="term" value="F:iron ion binding"/>
    <property type="evidence" value="ECO:0007669"/>
    <property type="project" value="UniProtKB-UniRule"/>
</dbReference>
<dbReference type="GO" id="GO:0008137">
    <property type="term" value="F:NADH dehydrogenase (ubiquinone) activity"/>
    <property type="evidence" value="ECO:0000318"/>
    <property type="project" value="GO_Central"/>
</dbReference>
<dbReference type="GO" id="GO:0050136">
    <property type="term" value="F:NADH:ubiquinone reductase (non-electrogenic) activity"/>
    <property type="evidence" value="ECO:0007669"/>
    <property type="project" value="UniProtKB-UniRule"/>
</dbReference>
<dbReference type="GO" id="GO:0048038">
    <property type="term" value="F:quinone binding"/>
    <property type="evidence" value="ECO:0007669"/>
    <property type="project" value="UniProtKB-KW"/>
</dbReference>
<dbReference type="GO" id="GO:0009060">
    <property type="term" value="P:aerobic respiration"/>
    <property type="evidence" value="ECO:0000318"/>
    <property type="project" value="GO_Central"/>
</dbReference>
<dbReference type="GO" id="GO:0015990">
    <property type="term" value="P:electron transport coupled proton transport"/>
    <property type="evidence" value="ECO:0000318"/>
    <property type="project" value="GO_Central"/>
</dbReference>
<dbReference type="FunFam" id="3.40.50.12280:FF:000002">
    <property type="entry name" value="NADH-quinone oxidoreductase subunit B"/>
    <property type="match status" value="1"/>
</dbReference>
<dbReference type="Gene3D" id="3.40.50.12280">
    <property type="match status" value="1"/>
</dbReference>
<dbReference type="HAMAP" id="MF_01356">
    <property type="entry name" value="NDH1_NuoB"/>
    <property type="match status" value="1"/>
</dbReference>
<dbReference type="InterPro" id="IPR006137">
    <property type="entry name" value="NADH_UbQ_OxRdtase-like_20kDa"/>
</dbReference>
<dbReference type="InterPro" id="IPR006138">
    <property type="entry name" value="NADH_UQ_OxRdtase_20Kd_su"/>
</dbReference>
<dbReference type="NCBIfam" id="TIGR01957">
    <property type="entry name" value="nuoB_fam"/>
    <property type="match status" value="1"/>
</dbReference>
<dbReference type="NCBIfam" id="NF005012">
    <property type="entry name" value="PRK06411.1"/>
    <property type="match status" value="1"/>
</dbReference>
<dbReference type="PANTHER" id="PTHR11995">
    <property type="entry name" value="NADH DEHYDROGENASE"/>
    <property type="match status" value="1"/>
</dbReference>
<dbReference type="PANTHER" id="PTHR11995:SF14">
    <property type="entry name" value="NADH DEHYDROGENASE [UBIQUINONE] IRON-SULFUR PROTEIN 7, MITOCHONDRIAL"/>
    <property type="match status" value="1"/>
</dbReference>
<dbReference type="Pfam" id="PF01058">
    <property type="entry name" value="Oxidored_q6"/>
    <property type="match status" value="1"/>
</dbReference>
<dbReference type="SUPFAM" id="SSF56770">
    <property type="entry name" value="HydA/Nqo6-like"/>
    <property type="match status" value="1"/>
</dbReference>
<keyword id="KW-0004">4Fe-4S</keyword>
<keyword id="KW-0997">Cell inner membrane</keyword>
<keyword id="KW-1003">Cell membrane</keyword>
<keyword id="KW-0408">Iron</keyword>
<keyword id="KW-0411">Iron-sulfur</keyword>
<keyword id="KW-0472">Membrane</keyword>
<keyword id="KW-0479">Metal-binding</keyword>
<keyword id="KW-0520">NAD</keyword>
<keyword id="KW-0874">Quinone</keyword>
<keyword id="KW-1185">Reference proteome</keyword>
<keyword id="KW-1278">Translocase</keyword>
<keyword id="KW-0813">Transport</keyword>
<keyword id="KW-0830">Ubiquinone</keyword>